<accession>A1AG59</accession>
<keyword id="KW-1185">Reference proteome</keyword>
<reference key="1">
    <citation type="journal article" date="2007" name="J. Bacteriol.">
        <title>The genome sequence of avian pathogenic Escherichia coli strain O1:K1:H7 shares strong similarities with human extraintestinal pathogenic E. coli genomes.</title>
        <authorList>
            <person name="Johnson T.J."/>
            <person name="Kariyawasam S."/>
            <person name="Wannemuehler Y."/>
            <person name="Mangiamele P."/>
            <person name="Johnson S.J."/>
            <person name="Doetkott C."/>
            <person name="Skyberg J.A."/>
            <person name="Lynne A.M."/>
            <person name="Johnson J.R."/>
            <person name="Nolan L.K."/>
        </authorList>
    </citation>
    <scope>NUCLEOTIDE SEQUENCE [LARGE SCALE GENOMIC DNA]</scope>
</reference>
<organism>
    <name type="scientific">Escherichia coli O1:K1 / APEC</name>
    <dbReference type="NCBI Taxonomy" id="405955"/>
    <lineage>
        <taxon>Bacteria</taxon>
        <taxon>Pseudomonadati</taxon>
        <taxon>Pseudomonadota</taxon>
        <taxon>Gammaproteobacteria</taxon>
        <taxon>Enterobacterales</taxon>
        <taxon>Enterobacteriaceae</taxon>
        <taxon>Escherichia</taxon>
    </lineage>
</organism>
<protein>
    <recommendedName>
        <fullName evidence="1">UPF0306 protein YhbP</fullName>
    </recommendedName>
</protein>
<evidence type="ECO:0000255" key="1">
    <source>
        <dbReference type="HAMAP-Rule" id="MF_00764"/>
    </source>
</evidence>
<sequence length="147" mass="16777">METLTAISRWLAKQHVVTWCVQQEGELWCANAFYLFDAQKVAFYILTEEKTRHAQMSGPQAAIAGTVNGQPKTVALIRGVQFKGEIRRLEGEESDLARKAYNRRFPVARMLSAPVWEIRLDEIKFTDNTLGFGKKMIWLRNSGTEQA</sequence>
<proteinExistence type="inferred from homology"/>
<name>YHBP_ECOK1</name>
<dbReference type="EMBL" id="CP000468">
    <property type="protein sequence ID" value="ABJ02649.1"/>
    <property type="molecule type" value="Genomic_DNA"/>
</dbReference>
<dbReference type="RefSeq" id="WP_000449450.1">
    <property type="nucleotide sequence ID" value="NZ_CADILS010000003.1"/>
</dbReference>
<dbReference type="SMR" id="A1AG59"/>
<dbReference type="KEGG" id="ecv:APECO1_3276"/>
<dbReference type="HOGENOM" id="CLU_105087_3_0_6"/>
<dbReference type="Proteomes" id="UP000008216">
    <property type="component" value="Chromosome"/>
</dbReference>
<dbReference type="FunFam" id="2.30.110.10:FF:000003">
    <property type="entry name" value="UPF0306 protein YhbP"/>
    <property type="match status" value="1"/>
</dbReference>
<dbReference type="Gene3D" id="2.30.110.10">
    <property type="entry name" value="Electron Transport, Fmn-binding Protein, Chain A"/>
    <property type="match status" value="1"/>
</dbReference>
<dbReference type="HAMAP" id="MF_00764">
    <property type="entry name" value="UPF0306"/>
    <property type="match status" value="1"/>
</dbReference>
<dbReference type="InterPro" id="IPR012349">
    <property type="entry name" value="Split_barrel_FMN-bd"/>
</dbReference>
<dbReference type="InterPro" id="IPR011194">
    <property type="entry name" value="UPF0306"/>
</dbReference>
<dbReference type="NCBIfam" id="NF002900">
    <property type="entry name" value="PRK03467.1"/>
    <property type="match status" value="1"/>
</dbReference>
<dbReference type="PIRSF" id="PIRSF009554">
    <property type="entry name" value="UCP009554"/>
    <property type="match status" value="1"/>
</dbReference>
<dbReference type="SUPFAM" id="SSF50475">
    <property type="entry name" value="FMN-binding split barrel"/>
    <property type="match status" value="1"/>
</dbReference>
<feature type="chain" id="PRO_1000046776" description="UPF0306 protein YhbP">
    <location>
        <begin position="1"/>
        <end position="147"/>
    </location>
</feature>
<gene>
    <name evidence="1" type="primary">yhbP</name>
    <name type="ordered locus">Ecok1_31550</name>
    <name type="ORF">APECO1_3276</name>
</gene>
<comment type="similarity">
    <text evidence="1">Belongs to the UPF0306 family.</text>
</comment>